<dbReference type="EMBL" id="AY261363">
    <property type="status" value="NOT_ANNOTATED_CDS"/>
    <property type="molecule type" value="Genomic_DNA"/>
</dbReference>
<dbReference type="Proteomes" id="UP000000859">
    <property type="component" value="Segment"/>
</dbReference>
<dbReference type="GO" id="GO:0044423">
    <property type="term" value="C:virion component"/>
    <property type="evidence" value="ECO:0007669"/>
    <property type="project" value="UniProtKB-KW"/>
</dbReference>
<feature type="signal peptide" evidence="2">
    <location>
        <begin position="1"/>
        <end position="23"/>
    </location>
</feature>
<feature type="chain" id="PRO_0000373537" description="Uncharacterized protein EP152R">
    <location>
        <begin position="24"/>
        <end position="150"/>
    </location>
</feature>
<organism>
    <name type="scientific">African swine fever virus (isolate Tick/South Africa/Pretoriuskop Pr4/1996)</name>
    <name type="common">ASFV</name>
    <dbReference type="NCBI Taxonomy" id="561443"/>
    <lineage>
        <taxon>Viruses</taxon>
        <taxon>Varidnaviria</taxon>
        <taxon>Bamfordvirae</taxon>
        <taxon>Nucleocytoviricota</taxon>
        <taxon>Pokkesviricetes</taxon>
        <taxon>Asfuvirales</taxon>
        <taxon>Asfarviridae</taxon>
        <taxon>Asfivirus</taxon>
        <taxon>African swine fever virus</taxon>
    </lineage>
</organism>
<protein>
    <recommendedName>
        <fullName>Uncharacterized protein EP152R</fullName>
        <shortName>pEP152R</shortName>
    </recommendedName>
</protein>
<comment type="subcellular location">
    <subcellularLocation>
        <location evidence="1">Virion</location>
    </subcellularLocation>
</comment>
<comment type="similarity">
    <text evidence="3">Belongs to the asfivirus EP152R family.</text>
</comment>
<gene>
    <name type="ordered locus">Pret-068</name>
</gene>
<keyword id="KW-0732">Signal</keyword>
<keyword id="KW-0946">Virion</keyword>
<reference key="1">
    <citation type="submission" date="2003-03" db="EMBL/GenBank/DDBJ databases">
        <title>African swine fever virus genomes.</title>
        <authorList>
            <person name="Kutish G.F."/>
            <person name="Rock D.L."/>
        </authorList>
    </citation>
    <scope>NUCLEOTIDE SEQUENCE [LARGE SCALE GENOMIC DNA]</scope>
</reference>
<organismHost>
    <name type="scientific">Ornithodoros</name>
    <name type="common">relapsing fever ticks</name>
    <dbReference type="NCBI Taxonomy" id="6937"/>
</organismHost>
<organismHost>
    <name type="scientific">Phacochoerus aethiopicus</name>
    <name type="common">Warthog</name>
    <dbReference type="NCBI Taxonomy" id="85517"/>
</organismHost>
<organismHost>
    <name type="scientific">Phacochoerus africanus</name>
    <name type="common">Warthog</name>
    <dbReference type="NCBI Taxonomy" id="41426"/>
</organismHost>
<organismHost>
    <name type="scientific">Potamochoerus larvatus</name>
    <name type="common">Bushpig</name>
    <dbReference type="NCBI Taxonomy" id="273792"/>
</organismHost>
<organismHost>
    <name type="scientific">Sus scrofa</name>
    <name type="common">Pig</name>
    <dbReference type="NCBI Taxonomy" id="9823"/>
</organismHost>
<accession>P0CA61</accession>
<sequence length="150" mass="17544">MYSILIACLVLLLCLIIYVGHRADHARKYLEGMWHGDPVFLKQSGLQSFYLYIQPDHTCFFSVVNKNGEKLMETKIPCTITNKIYMFFKPIFEFHVVMEDIHSYFPKQFNFLLDSTEGKLILENNHVIYAVLYKDNFATALGKTVKKYIT</sequence>
<proteinExistence type="inferred from homology"/>
<evidence type="ECO:0000250" key="1">
    <source>
        <dbReference type="UniProtKB" id="Q65149"/>
    </source>
</evidence>
<evidence type="ECO:0000255" key="2"/>
<evidence type="ECO:0000305" key="3"/>
<name>VF152_ASFP4</name>